<dbReference type="EC" id="7.1.2.2" evidence="1"/>
<dbReference type="EMBL" id="EU262891">
    <property type="protein sequence ID" value="ABX10127.1"/>
    <property type="molecule type" value="Genomic_DNA"/>
</dbReference>
<dbReference type="RefSeq" id="YP_001687457.1">
    <property type="nucleotide sequence ID" value="NC_010362.1"/>
</dbReference>
<dbReference type="SMR" id="B0Z5D4"/>
<dbReference type="GeneID" id="5955415"/>
<dbReference type="GO" id="GO:0009535">
    <property type="term" value="C:chloroplast thylakoid membrane"/>
    <property type="evidence" value="ECO:0007669"/>
    <property type="project" value="UniProtKB-SubCell"/>
</dbReference>
<dbReference type="GO" id="GO:0045259">
    <property type="term" value="C:proton-transporting ATP synthase complex"/>
    <property type="evidence" value="ECO:0007669"/>
    <property type="project" value="UniProtKB-KW"/>
</dbReference>
<dbReference type="GO" id="GO:0043531">
    <property type="term" value="F:ADP binding"/>
    <property type="evidence" value="ECO:0007669"/>
    <property type="project" value="TreeGrafter"/>
</dbReference>
<dbReference type="GO" id="GO:0005524">
    <property type="term" value="F:ATP binding"/>
    <property type="evidence" value="ECO:0007669"/>
    <property type="project" value="UniProtKB-UniRule"/>
</dbReference>
<dbReference type="GO" id="GO:0046933">
    <property type="term" value="F:proton-transporting ATP synthase activity, rotational mechanism"/>
    <property type="evidence" value="ECO:0007669"/>
    <property type="project" value="UniProtKB-UniRule"/>
</dbReference>
<dbReference type="CDD" id="cd18113">
    <property type="entry name" value="ATP-synt_F1_alpha_C"/>
    <property type="match status" value="1"/>
</dbReference>
<dbReference type="CDD" id="cd18116">
    <property type="entry name" value="ATP-synt_F1_alpha_N"/>
    <property type="match status" value="1"/>
</dbReference>
<dbReference type="CDD" id="cd01132">
    <property type="entry name" value="F1-ATPase_alpha_CD"/>
    <property type="match status" value="1"/>
</dbReference>
<dbReference type="FunFam" id="1.20.150.20:FF:000001">
    <property type="entry name" value="ATP synthase subunit alpha"/>
    <property type="match status" value="1"/>
</dbReference>
<dbReference type="FunFam" id="2.40.30.20:FF:000001">
    <property type="entry name" value="ATP synthase subunit alpha"/>
    <property type="match status" value="1"/>
</dbReference>
<dbReference type="FunFam" id="3.40.50.300:FF:000002">
    <property type="entry name" value="ATP synthase subunit alpha"/>
    <property type="match status" value="1"/>
</dbReference>
<dbReference type="Gene3D" id="2.40.30.20">
    <property type="match status" value="1"/>
</dbReference>
<dbReference type="Gene3D" id="1.20.150.20">
    <property type="entry name" value="ATP synthase alpha/beta chain, C-terminal domain"/>
    <property type="match status" value="1"/>
</dbReference>
<dbReference type="Gene3D" id="3.40.50.300">
    <property type="entry name" value="P-loop containing nucleotide triphosphate hydrolases"/>
    <property type="match status" value="1"/>
</dbReference>
<dbReference type="HAMAP" id="MF_01346">
    <property type="entry name" value="ATP_synth_alpha_bact"/>
    <property type="match status" value="1"/>
</dbReference>
<dbReference type="InterPro" id="IPR023366">
    <property type="entry name" value="ATP_synth_asu-like_sf"/>
</dbReference>
<dbReference type="InterPro" id="IPR000793">
    <property type="entry name" value="ATP_synth_asu_C"/>
</dbReference>
<dbReference type="InterPro" id="IPR038376">
    <property type="entry name" value="ATP_synth_asu_C_sf"/>
</dbReference>
<dbReference type="InterPro" id="IPR033732">
    <property type="entry name" value="ATP_synth_F1_a_nt-bd_dom"/>
</dbReference>
<dbReference type="InterPro" id="IPR005294">
    <property type="entry name" value="ATP_synth_F1_asu"/>
</dbReference>
<dbReference type="InterPro" id="IPR020003">
    <property type="entry name" value="ATPase_a/bsu_AS"/>
</dbReference>
<dbReference type="InterPro" id="IPR004100">
    <property type="entry name" value="ATPase_F1/V1/A1_a/bsu_N"/>
</dbReference>
<dbReference type="InterPro" id="IPR036121">
    <property type="entry name" value="ATPase_F1/V1/A1_a/bsu_N_sf"/>
</dbReference>
<dbReference type="InterPro" id="IPR000194">
    <property type="entry name" value="ATPase_F1/V1/A1_a/bsu_nucl-bd"/>
</dbReference>
<dbReference type="InterPro" id="IPR027417">
    <property type="entry name" value="P-loop_NTPase"/>
</dbReference>
<dbReference type="NCBIfam" id="TIGR00962">
    <property type="entry name" value="atpA"/>
    <property type="match status" value="1"/>
</dbReference>
<dbReference type="NCBIfam" id="NF009884">
    <property type="entry name" value="PRK13343.1"/>
    <property type="match status" value="1"/>
</dbReference>
<dbReference type="PANTHER" id="PTHR48082">
    <property type="entry name" value="ATP SYNTHASE SUBUNIT ALPHA, MITOCHONDRIAL"/>
    <property type="match status" value="1"/>
</dbReference>
<dbReference type="PANTHER" id="PTHR48082:SF2">
    <property type="entry name" value="ATP SYNTHASE SUBUNIT ALPHA, MITOCHONDRIAL"/>
    <property type="match status" value="1"/>
</dbReference>
<dbReference type="Pfam" id="PF00006">
    <property type="entry name" value="ATP-synt_ab"/>
    <property type="match status" value="1"/>
</dbReference>
<dbReference type="Pfam" id="PF00306">
    <property type="entry name" value="ATP-synt_ab_C"/>
    <property type="match status" value="1"/>
</dbReference>
<dbReference type="Pfam" id="PF02874">
    <property type="entry name" value="ATP-synt_ab_N"/>
    <property type="match status" value="1"/>
</dbReference>
<dbReference type="PIRSF" id="PIRSF039088">
    <property type="entry name" value="F_ATPase_subunit_alpha"/>
    <property type="match status" value="1"/>
</dbReference>
<dbReference type="SUPFAM" id="SSF47917">
    <property type="entry name" value="C-terminal domain of alpha and beta subunits of F1 ATP synthase"/>
    <property type="match status" value="1"/>
</dbReference>
<dbReference type="SUPFAM" id="SSF50615">
    <property type="entry name" value="N-terminal domain of alpha and beta subunits of F1 ATP synthase"/>
    <property type="match status" value="1"/>
</dbReference>
<dbReference type="SUPFAM" id="SSF52540">
    <property type="entry name" value="P-loop containing nucleoside triphosphate hydrolases"/>
    <property type="match status" value="1"/>
</dbReference>
<dbReference type="PROSITE" id="PS00152">
    <property type="entry name" value="ATPASE_ALPHA_BETA"/>
    <property type="match status" value="1"/>
</dbReference>
<reference key="1">
    <citation type="journal article" date="2008" name="Nucleic Acids Res.">
        <title>The complete nucleotide sequences of the five genetically distinct plastid genomes of Oenothera, subsection Oenothera: I. Sequence evaluation and plastome evolution.</title>
        <authorList>
            <person name="Greiner S."/>
            <person name="Wang X."/>
            <person name="Rauwolf U."/>
            <person name="Silber M.V."/>
            <person name="Mayer K."/>
            <person name="Meurer J."/>
            <person name="Haberer G."/>
            <person name="Herrmann R.G."/>
        </authorList>
    </citation>
    <scope>NUCLEOTIDE SEQUENCE [LARGE SCALE GENOMIC DNA]</scope>
    <source>
        <strain>cv. Atrovirens</strain>
    </source>
</reference>
<gene>
    <name evidence="1" type="primary">atpA</name>
</gene>
<organism>
    <name type="scientific">Oenothera parviflora</name>
    <name type="common">Small-flowered evening primrose</name>
    <name type="synonym">Oenothera cruciata</name>
    <dbReference type="NCBI Taxonomy" id="482429"/>
    <lineage>
        <taxon>Eukaryota</taxon>
        <taxon>Viridiplantae</taxon>
        <taxon>Streptophyta</taxon>
        <taxon>Embryophyta</taxon>
        <taxon>Tracheophyta</taxon>
        <taxon>Spermatophyta</taxon>
        <taxon>Magnoliopsida</taxon>
        <taxon>eudicotyledons</taxon>
        <taxon>Gunneridae</taxon>
        <taxon>Pentapetalae</taxon>
        <taxon>rosids</taxon>
        <taxon>malvids</taxon>
        <taxon>Myrtales</taxon>
        <taxon>Onagraceae</taxon>
        <taxon>Onagroideae</taxon>
        <taxon>Onagreae</taxon>
        <taxon>Oenothera</taxon>
    </lineage>
</organism>
<feature type="chain" id="PRO_0000339103" description="ATP synthase subunit alpha, chloroplastic">
    <location>
        <begin position="1"/>
        <end position="505"/>
    </location>
</feature>
<feature type="binding site" evidence="1">
    <location>
        <begin position="170"/>
        <end position="177"/>
    </location>
    <ligand>
        <name>ATP</name>
        <dbReference type="ChEBI" id="CHEBI:30616"/>
    </ligand>
</feature>
<feature type="site" description="Required for activity" evidence="1">
    <location>
        <position position="363"/>
    </location>
</feature>
<accession>B0Z5D4</accession>
<keyword id="KW-0066">ATP synthesis</keyword>
<keyword id="KW-0067">ATP-binding</keyword>
<keyword id="KW-0139">CF(1)</keyword>
<keyword id="KW-0150">Chloroplast</keyword>
<keyword id="KW-0375">Hydrogen ion transport</keyword>
<keyword id="KW-0406">Ion transport</keyword>
<keyword id="KW-0472">Membrane</keyword>
<keyword id="KW-0547">Nucleotide-binding</keyword>
<keyword id="KW-0934">Plastid</keyword>
<keyword id="KW-0793">Thylakoid</keyword>
<keyword id="KW-1278">Translocase</keyword>
<keyword id="KW-0813">Transport</keyword>
<geneLocation type="chloroplast"/>
<sequence>MATIRADEISNIIRERIEQYNREVKIVNTGTVLQVGDGIARIYGLDEVMAGELVEFEEGTIGIALNLESKNVGVVLMGDGLMIQEGSSVKATGRIAQIPVSEAYLGRVINALAKPIDGRGEISSSESRLIESPAPGIISRRSVYEPLQTGLIAIDAMIPIGRGQRELIIGDRQTGKTAVATDTILNQQGNNVICVYVAIGQKASSVAQVVNALQERGAMEYTIVVAEAADSPATLQYLAPYTGAALAEYFMYRERHTLIIYDDPSKQAQAYRQMSLLLRRPPGREAYPGDVFYLHSRLLERAAKLSSRLGEGSMTALPIVETQSGDVSAYIPTNVISITDGQIFLSADLFNAGIRPAINVGISVSRVGSAAQIKAMKQVAGKLKLELAQFAELEAFAQFSSDLDKATQNQLARGQRLRELLKQSQAKPLTVAEQILTIYTGTNGYLDSFEIAQVRKFLDELRDYVKTRKPQFEEIISSTKIFTEEAQALLKDAIQEQKELFLVQE</sequence>
<proteinExistence type="inferred from homology"/>
<comment type="function">
    <text evidence="1">Produces ATP from ADP in the presence of a proton gradient across the membrane. The alpha chain is a regulatory subunit.</text>
</comment>
<comment type="catalytic activity">
    <reaction evidence="1">
        <text>ATP + H2O + 4 H(+)(in) = ADP + phosphate + 5 H(+)(out)</text>
        <dbReference type="Rhea" id="RHEA:57720"/>
        <dbReference type="ChEBI" id="CHEBI:15377"/>
        <dbReference type="ChEBI" id="CHEBI:15378"/>
        <dbReference type="ChEBI" id="CHEBI:30616"/>
        <dbReference type="ChEBI" id="CHEBI:43474"/>
        <dbReference type="ChEBI" id="CHEBI:456216"/>
        <dbReference type="EC" id="7.1.2.2"/>
    </reaction>
</comment>
<comment type="subunit">
    <text evidence="1">F-type ATPases have 2 components, CF(1) - the catalytic core - and CF(0) - the membrane proton channel. CF(1) has five subunits: alpha(3), beta(3), gamma(1), delta(1), epsilon(1). CF(0) has four main subunits: a, b, b' and c.</text>
</comment>
<comment type="subcellular location">
    <subcellularLocation>
        <location evidence="1">Plastid</location>
        <location evidence="1">Chloroplast thylakoid membrane</location>
        <topology evidence="1">Peripheral membrane protein</topology>
    </subcellularLocation>
</comment>
<comment type="similarity">
    <text evidence="1">Belongs to the ATPase alpha/beta chains family.</text>
</comment>
<protein>
    <recommendedName>
        <fullName evidence="1">ATP synthase subunit alpha, chloroplastic</fullName>
        <ecNumber evidence="1">7.1.2.2</ecNumber>
    </recommendedName>
    <alternativeName>
        <fullName evidence="1">ATP synthase F1 sector subunit alpha</fullName>
    </alternativeName>
    <alternativeName>
        <fullName evidence="1">F-ATPase subunit alpha</fullName>
    </alternativeName>
</protein>
<evidence type="ECO:0000255" key="1">
    <source>
        <dbReference type="HAMAP-Rule" id="MF_01346"/>
    </source>
</evidence>
<name>ATPA_OENPA</name>